<protein>
    <recommendedName>
        <fullName>Cytokinin dehydrogenase 4</fullName>
        <ecNumber evidence="5">1.5.99.12</ecNumber>
    </recommendedName>
    <alternativeName>
        <fullName>Cytokinin oxidase 4</fullName>
        <shortName>AtCKX4</shortName>
        <shortName>CKO 4</shortName>
    </alternativeName>
</protein>
<reference key="1">
    <citation type="journal article" date="2001" name="Plant Physiol.">
        <title>Molecular and biochemical characterization of a cytokinin oxidase from maize.</title>
        <authorList>
            <person name="Bilyeu K.D."/>
            <person name="Cole J.L."/>
            <person name="Laskey J.G."/>
            <person name="Riekhof W.R."/>
            <person name="Esparza T.J."/>
            <person name="Kramer M.D."/>
            <person name="Morris R.O."/>
        </authorList>
    </citation>
    <scope>NUCLEOTIDE SEQUENCE [MRNA]</scope>
</reference>
<reference key="2">
    <citation type="journal article" date="1999" name="Nature">
        <title>Sequence and analysis of chromosome 4 of the plant Arabidopsis thaliana.</title>
        <authorList>
            <person name="Mayer K.F.X."/>
            <person name="Schueller C."/>
            <person name="Wambutt R."/>
            <person name="Murphy G."/>
            <person name="Volckaert G."/>
            <person name="Pohl T."/>
            <person name="Duesterhoeft A."/>
            <person name="Stiekema W."/>
            <person name="Entian K.-D."/>
            <person name="Terryn N."/>
            <person name="Harris B."/>
            <person name="Ansorge W."/>
            <person name="Brandt P."/>
            <person name="Grivell L.A."/>
            <person name="Rieger M."/>
            <person name="Weichselgartner M."/>
            <person name="de Simone V."/>
            <person name="Obermaier B."/>
            <person name="Mache R."/>
            <person name="Mueller M."/>
            <person name="Kreis M."/>
            <person name="Delseny M."/>
            <person name="Puigdomenech P."/>
            <person name="Watson M."/>
            <person name="Schmidtheini T."/>
            <person name="Reichert B."/>
            <person name="Portetelle D."/>
            <person name="Perez-Alonso M."/>
            <person name="Boutry M."/>
            <person name="Bancroft I."/>
            <person name="Vos P."/>
            <person name="Hoheisel J."/>
            <person name="Zimmermann W."/>
            <person name="Wedler H."/>
            <person name="Ridley P."/>
            <person name="Langham S.-A."/>
            <person name="McCullagh B."/>
            <person name="Bilham L."/>
            <person name="Robben J."/>
            <person name="van der Schueren J."/>
            <person name="Grymonprez B."/>
            <person name="Chuang Y.-J."/>
            <person name="Vandenbussche F."/>
            <person name="Braeken M."/>
            <person name="Weltjens I."/>
            <person name="Voet M."/>
            <person name="Bastiaens I."/>
            <person name="Aert R."/>
            <person name="Defoor E."/>
            <person name="Weitzenegger T."/>
            <person name="Bothe G."/>
            <person name="Ramsperger U."/>
            <person name="Hilbert H."/>
            <person name="Braun M."/>
            <person name="Holzer E."/>
            <person name="Brandt A."/>
            <person name="Peters S."/>
            <person name="van Staveren M."/>
            <person name="Dirkse W."/>
            <person name="Mooijman P."/>
            <person name="Klein Lankhorst R."/>
            <person name="Rose M."/>
            <person name="Hauf J."/>
            <person name="Koetter P."/>
            <person name="Berneiser S."/>
            <person name="Hempel S."/>
            <person name="Feldpausch M."/>
            <person name="Lamberth S."/>
            <person name="Van den Daele H."/>
            <person name="De Keyser A."/>
            <person name="Buysshaert C."/>
            <person name="Gielen J."/>
            <person name="Villarroel R."/>
            <person name="De Clercq R."/>
            <person name="van Montagu M."/>
            <person name="Rogers J."/>
            <person name="Cronin A."/>
            <person name="Quail M.A."/>
            <person name="Bray-Allen S."/>
            <person name="Clark L."/>
            <person name="Doggett J."/>
            <person name="Hall S."/>
            <person name="Kay M."/>
            <person name="Lennard N."/>
            <person name="McLay K."/>
            <person name="Mayes R."/>
            <person name="Pettett A."/>
            <person name="Rajandream M.A."/>
            <person name="Lyne M."/>
            <person name="Benes V."/>
            <person name="Rechmann S."/>
            <person name="Borkova D."/>
            <person name="Bloecker H."/>
            <person name="Scharfe M."/>
            <person name="Grimm M."/>
            <person name="Loehnert T.-H."/>
            <person name="Dose S."/>
            <person name="de Haan M."/>
            <person name="Maarse A.C."/>
            <person name="Schaefer M."/>
            <person name="Mueller-Auer S."/>
            <person name="Gabel C."/>
            <person name="Fuchs M."/>
            <person name="Fartmann B."/>
            <person name="Granderath K."/>
            <person name="Dauner D."/>
            <person name="Herzl A."/>
            <person name="Neumann S."/>
            <person name="Argiriou A."/>
            <person name="Vitale D."/>
            <person name="Liguori R."/>
            <person name="Piravandi E."/>
            <person name="Massenet O."/>
            <person name="Quigley F."/>
            <person name="Clabauld G."/>
            <person name="Muendlein A."/>
            <person name="Felber R."/>
            <person name="Schnabl S."/>
            <person name="Hiller R."/>
            <person name="Schmidt W."/>
            <person name="Lecharny A."/>
            <person name="Aubourg S."/>
            <person name="Chefdor F."/>
            <person name="Cooke R."/>
            <person name="Berger C."/>
            <person name="Monfort A."/>
            <person name="Casacuberta E."/>
            <person name="Gibbons T."/>
            <person name="Weber N."/>
            <person name="Vandenbol M."/>
            <person name="Bargues M."/>
            <person name="Terol J."/>
            <person name="Torres A."/>
            <person name="Perez-Perez A."/>
            <person name="Purnelle B."/>
            <person name="Bent E."/>
            <person name="Johnson S."/>
            <person name="Tacon D."/>
            <person name="Jesse T."/>
            <person name="Heijnen L."/>
            <person name="Schwarz S."/>
            <person name="Scholler P."/>
            <person name="Heber S."/>
            <person name="Francs P."/>
            <person name="Bielke C."/>
            <person name="Frishman D."/>
            <person name="Haase D."/>
            <person name="Lemcke K."/>
            <person name="Mewes H.-W."/>
            <person name="Stocker S."/>
            <person name="Zaccaria P."/>
            <person name="Bevan M."/>
            <person name="Wilson R.K."/>
            <person name="de la Bastide M."/>
            <person name="Habermann K."/>
            <person name="Parnell L."/>
            <person name="Dedhia N."/>
            <person name="Gnoj L."/>
            <person name="Schutz K."/>
            <person name="Huang E."/>
            <person name="Spiegel L."/>
            <person name="Sekhon M."/>
            <person name="Murray J."/>
            <person name="Sheet P."/>
            <person name="Cordes M."/>
            <person name="Abu-Threideh J."/>
            <person name="Stoneking T."/>
            <person name="Kalicki J."/>
            <person name="Graves T."/>
            <person name="Harmon G."/>
            <person name="Edwards J."/>
            <person name="Latreille P."/>
            <person name="Courtney L."/>
            <person name="Cloud J."/>
            <person name="Abbott A."/>
            <person name="Scott K."/>
            <person name="Johnson D."/>
            <person name="Minx P."/>
            <person name="Bentley D."/>
            <person name="Fulton B."/>
            <person name="Miller N."/>
            <person name="Greco T."/>
            <person name="Kemp K."/>
            <person name="Kramer J."/>
            <person name="Fulton L."/>
            <person name="Mardis E."/>
            <person name="Dante M."/>
            <person name="Pepin K."/>
            <person name="Hillier L.W."/>
            <person name="Nelson J."/>
            <person name="Spieth J."/>
            <person name="Ryan E."/>
            <person name="Andrews S."/>
            <person name="Geisel C."/>
            <person name="Layman D."/>
            <person name="Du H."/>
            <person name="Ali J."/>
            <person name="Berghoff A."/>
            <person name="Jones K."/>
            <person name="Drone K."/>
            <person name="Cotton M."/>
            <person name="Joshu C."/>
            <person name="Antonoiu B."/>
            <person name="Zidanic M."/>
            <person name="Strong C."/>
            <person name="Sun H."/>
            <person name="Lamar B."/>
            <person name="Yordan C."/>
            <person name="Ma P."/>
            <person name="Zhong J."/>
            <person name="Preston R."/>
            <person name="Vil D."/>
            <person name="Shekher M."/>
            <person name="Matero A."/>
            <person name="Shah R."/>
            <person name="Swaby I.K."/>
            <person name="O'Shaughnessy A."/>
            <person name="Rodriguez M."/>
            <person name="Hoffman J."/>
            <person name="Till S."/>
            <person name="Granat S."/>
            <person name="Shohdy N."/>
            <person name="Hasegawa A."/>
            <person name="Hameed A."/>
            <person name="Lodhi M."/>
            <person name="Johnson A."/>
            <person name="Chen E."/>
            <person name="Marra M.A."/>
            <person name="Martienssen R."/>
            <person name="McCombie W.R."/>
        </authorList>
    </citation>
    <scope>NUCLEOTIDE SEQUENCE [LARGE SCALE GENOMIC DNA]</scope>
    <source>
        <strain>cv. Columbia</strain>
    </source>
</reference>
<reference key="3">
    <citation type="journal article" date="2017" name="Plant J.">
        <title>Araport11: a complete reannotation of the Arabidopsis thaliana reference genome.</title>
        <authorList>
            <person name="Cheng C.Y."/>
            <person name="Krishnakumar V."/>
            <person name="Chan A.P."/>
            <person name="Thibaud-Nissen F."/>
            <person name="Schobel S."/>
            <person name="Town C.D."/>
        </authorList>
    </citation>
    <scope>GENOME REANNOTATION</scope>
    <source>
        <strain>cv. Columbia</strain>
    </source>
</reference>
<reference key="4">
    <citation type="journal article" date="2003" name="Science">
        <title>Empirical analysis of transcriptional activity in the Arabidopsis genome.</title>
        <authorList>
            <person name="Yamada K."/>
            <person name="Lim J."/>
            <person name="Dale J.M."/>
            <person name="Chen H."/>
            <person name="Shinn P."/>
            <person name="Palm C.J."/>
            <person name="Southwick A.M."/>
            <person name="Wu H.C."/>
            <person name="Kim C.J."/>
            <person name="Nguyen M."/>
            <person name="Pham P.K."/>
            <person name="Cheuk R.F."/>
            <person name="Karlin-Newmann G."/>
            <person name="Liu S.X."/>
            <person name="Lam B."/>
            <person name="Sakano H."/>
            <person name="Wu T."/>
            <person name="Yu G."/>
            <person name="Miranda M."/>
            <person name="Quach H.L."/>
            <person name="Tripp M."/>
            <person name="Chang C.H."/>
            <person name="Lee J.M."/>
            <person name="Toriumi M.J."/>
            <person name="Chan M.M."/>
            <person name="Tang C.C."/>
            <person name="Onodera C.S."/>
            <person name="Deng J.M."/>
            <person name="Akiyama K."/>
            <person name="Ansari Y."/>
            <person name="Arakawa T."/>
            <person name="Banh J."/>
            <person name="Banno F."/>
            <person name="Bowser L."/>
            <person name="Brooks S.Y."/>
            <person name="Carninci P."/>
            <person name="Chao Q."/>
            <person name="Choy N."/>
            <person name="Enju A."/>
            <person name="Goldsmith A.D."/>
            <person name="Gurjal M."/>
            <person name="Hansen N.F."/>
            <person name="Hayashizaki Y."/>
            <person name="Johnson-Hopson C."/>
            <person name="Hsuan V.W."/>
            <person name="Iida K."/>
            <person name="Karnes M."/>
            <person name="Khan S."/>
            <person name="Koesema E."/>
            <person name="Ishida J."/>
            <person name="Jiang P.X."/>
            <person name="Jones T."/>
            <person name="Kawai J."/>
            <person name="Kamiya A."/>
            <person name="Meyers C."/>
            <person name="Nakajima M."/>
            <person name="Narusaka M."/>
            <person name="Seki M."/>
            <person name="Sakurai T."/>
            <person name="Satou M."/>
            <person name="Tamse R."/>
            <person name="Vaysberg M."/>
            <person name="Wallender E.K."/>
            <person name="Wong C."/>
            <person name="Yamamura Y."/>
            <person name="Yuan S."/>
            <person name="Shinozaki K."/>
            <person name="Davis R.W."/>
            <person name="Theologis A."/>
            <person name="Ecker J.R."/>
        </authorList>
    </citation>
    <scope>NUCLEOTIDE SEQUENCE [LARGE SCALE MRNA]</scope>
    <source>
        <strain>cv. Columbia</strain>
    </source>
</reference>
<reference key="5">
    <citation type="journal article" date="2003" name="Plant Cell">
        <title>Cytokinin-deficient transgenic Arabidopsis plants show multiple developmental alterations indicating opposite functions of cytokinins in the regulation of shoot and root meristem activity.</title>
        <authorList>
            <person name="Werner T."/>
            <person name="Motyka V."/>
            <person name="Laucou V."/>
            <person name="Smets R."/>
            <person name="Van Onckelen H."/>
            <person name="Schmulling T."/>
        </authorList>
    </citation>
    <scope>FUNCTION</scope>
    <scope>CATALYTIC ACTIVITY</scope>
    <scope>BIOPHYSICOCHEMICAL PROPERTIES</scope>
    <scope>TISSUE SPECIFICITY</scope>
    <scope>DEVELOPMENTAL STAGE</scope>
</reference>
<reference key="6">
    <citation type="journal article" date="2003" name="J. Plant Res.">
        <title>Structure and function of cytokinin oxidase/dehydrogenase genes of maize, rice, Arabidopsis and other species.</title>
        <authorList>
            <person name="Schmuelling T."/>
            <person name="Werner T."/>
            <person name="Riefler M."/>
            <person name="Krupkova E."/>
            <person name="Bartrina y Manns I."/>
        </authorList>
    </citation>
    <scope>REVIEW</scope>
    <scope>NOMENCLATURE</scope>
</reference>
<organism>
    <name type="scientific">Arabidopsis thaliana</name>
    <name type="common">Mouse-ear cress</name>
    <dbReference type="NCBI Taxonomy" id="3702"/>
    <lineage>
        <taxon>Eukaryota</taxon>
        <taxon>Viridiplantae</taxon>
        <taxon>Streptophyta</taxon>
        <taxon>Embryophyta</taxon>
        <taxon>Tracheophyta</taxon>
        <taxon>Spermatophyta</taxon>
        <taxon>Magnoliopsida</taxon>
        <taxon>eudicotyledons</taxon>
        <taxon>Gunneridae</taxon>
        <taxon>Pentapetalae</taxon>
        <taxon>rosids</taxon>
        <taxon>malvids</taxon>
        <taxon>Brassicales</taxon>
        <taxon>Brassicaceae</taxon>
        <taxon>Camelineae</taxon>
        <taxon>Arabidopsis</taxon>
    </lineage>
</organism>
<accession>Q9FUJ2</accession>
<accession>Q9SU77</accession>
<evidence type="ECO:0000250" key="1">
    <source>
        <dbReference type="UniProtKB" id="Q9FUJ1"/>
    </source>
</evidence>
<evidence type="ECO:0000250" key="2">
    <source>
        <dbReference type="UniProtKB" id="Q9T0N8"/>
    </source>
</evidence>
<evidence type="ECO:0000255" key="3"/>
<evidence type="ECO:0000255" key="4">
    <source>
        <dbReference type="PROSITE-ProRule" id="PRU00718"/>
    </source>
</evidence>
<evidence type="ECO:0000269" key="5">
    <source>
    </source>
</evidence>
<evidence type="ECO:0000305" key="6"/>
<dbReference type="EC" id="1.5.99.12" evidence="5"/>
<dbReference type="EMBL" id="AF303980">
    <property type="protein sequence ID" value="AAG30907.1"/>
    <property type="molecule type" value="mRNA"/>
</dbReference>
<dbReference type="EMBL" id="AL079344">
    <property type="protein sequence ID" value="CAB45334.1"/>
    <property type="molecule type" value="Genomic_DNA"/>
</dbReference>
<dbReference type="EMBL" id="AL161575">
    <property type="protein sequence ID" value="CAB79732.1"/>
    <property type="molecule type" value="Genomic_DNA"/>
</dbReference>
<dbReference type="EMBL" id="CP002687">
    <property type="protein sequence ID" value="AEE85669.1"/>
    <property type="molecule type" value="Genomic_DNA"/>
</dbReference>
<dbReference type="EMBL" id="AY054460">
    <property type="protein sequence ID" value="AAK96652.1"/>
    <property type="molecule type" value="mRNA"/>
</dbReference>
<dbReference type="EMBL" id="BT000179">
    <property type="protein sequence ID" value="AAN15498.1"/>
    <property type="molecule type" value="mRNA"/>
</dbReference>
<dbReference type="PIR" id="T09937">
    <property type="entry name" value="T09937"/>
</dbReference>
<dbReference type="RefSeq" id="NP_194703.1">
    <molecule id="Q9FUJ2-1"/>
    <property type="nucleotide sequence ID" value="NM_119120.2"/>
</dbReference>
<dbReference type="SMR" id="Q9FUJ2"/>
<dbReference type="FunCoup" id="Q9FUJ2">
    <property type="interactions" value="20"/>
</dbReference>
<dbReference type="STRING" id="3702.Q9FUJ2"/>
<dbReference type="GlyCosmos" id="Q9FUJ2">
    <property type="glycosylation" value="4 sites, No reported glycans"/>
</dbReference>
<dbReference type="GlyGen" id="Q9FUJ2">
    <property type="glycosylation" value="4 sites"/>
</dbReference>
<dbReference type="PaxDb" id="3702-AT4G29740.2"/>
<dbReference type="ProteomicsDB" id="222093">
    <molecule id="Q9FUJ2-1"/>
</dbReference>
<dbReference type="EnsemblPlants" id="AT4G29740.2">
    <molecule id="Q9FUJ2-1"/>
    <property type="protein sequence ID" value="AT4G29740.2"/>
    <property type="gene ID" value="AT4G29740"/>
</dbReference>
<dbReference type="GeneID" id="829096"/>
<dbReference type="Gramene" id="AT4G29740.2">
    <molecule id="Q9FUJ2-1"/>
    <property type="protein sequence ID" value="AT4G29740.2"/>
    <property type="gene ID" value="AT4G29740"/>
</dbReference>
<dbReference type="KEGG" id="ath:AT4G29740"/>
<dbReference type="Araport" id="AT4G29740"/>
<dbReference type="TAIR" id="AT4G29740">
    <property type="gene designation" value="CKX4"/>
</dbReference>
<dbReference type="eggNOG" id="KOG1231">
    <property type="taxonomic scope" value="Eukaryota"/>
</dbReference>
<dbReference type="HOGENOM" id="CLU_024955_1_0_1"/>
<dbReference type="InParanoid" id="Q9FUJ2"/>
<dbReference type="OMA" id="KWNNRMS"/>
<dbReference type="PhylomeDB" id="Q9FUJ2"/>
<dbReference type="BioCyc" id="ARA:AT4G29740-MONOMER"/>
<dbReference type="BioCyc" id="MetaCyc:AT4G29740-MONOMER"/>
<dbReference type="SABIO-RK" id="Q9FUJ2"/>
<dbReference type="PRO" id="PR:Q9FUJ2"/>
<dbReference type="Proteomes" id="UP000006548">
    <property type="component" value="Chromosome 4"/>
</dbReference>
<dbReference type="ExpressionAtlas" id="Q9FUJ2">
    <property type="expression patterns" value="baseline and differential"/>
</dbReference>
<dbReference type="GO" id="GO:0005576">
    <property type="term" value="C:extracellular region"/>
    <property type="evidence" value="ECO:0007669"/>
    <property type="project" value="UniProtKB-SubCell"/>
</dbReference>
<dbReference type="GO" id="GO:0019139">
    <property type="term" value="F:cytokinin dehydrogenase activity"/>
    <property type="evidence" value="ECO:0000304"/>
    <property type="project" value="TAIR"/>
</dbReference>
<dbReference type="GO" id="GO:0071949">
    <property type="term" value="F:FAD binding"/>
    <property type="evidence" value="ECO:0007669"/>
    <property type="project" value="InterPro"/>
</dbReference>
<dbReference type="GO" id="GO:0008131">
    <property type="term" value="F:primary methylamine oxidase activity"/>
    <property type="evidence" value="ECO:0000304"/>
    <property type="project" value="TAIR"/>
</dbReference>
<dbReference type="GO" id="GO:0009823">
    <property type="term" value="P:cytokinin catabolic process"/>
    <property type="evidence" value="ECO:0000304"/>
    <property type="project" value="TAIR"/>
</dbReference>
<dbReference type="FunFam" id="3.30.465.10:FF:000021">
    <property type="entry name" value="Cytokinin dehydrogenase 1"/>
    <property type="match status" value="1"/>
</dbReference>
<dbReference type="FunFam" id="3.40.462.10:FF:000001">
    <property type="entry name" value="Cytokinin dehydrogenase 2"/>
    <property type="match status" value="1"/>
</dbReference>
<dbReference type="Gene3D" id="3.30.465.10">
    <property type="match status" value="1"/>
</dbReference>
<dbReference type="Gene3D" id="3.40.462.10">
    <property type="entry name" value="FAD-linked oxidases, C-terminal domain"/>
    <property type="match status" value="1"/>
</dbReference>
<dbReference type="Gene3D" id="3.30.43.10">
    <property type="entry name" value="Uridine Diphospho-n-acetylenolpyruvylglucosamine Reductase, domain 2"/>
    <property type="match status" value="1"/>
</dbReference>
<dbReference type="InterPro" id="IPR016170">
    <property type="entry name" value="Cytok_DH_C_sf"/>
</dbReference>
<dbReference type="InterPro" id="IPR015345">
    <property type="entry name" value="Cytokinin_DH_FAD/cytokin-bd"/>
</dbReference>
<dbReference type="InterPro" id="IPR016166">
    <property type="entry name" value="FAD-bd_PCMH"/>
</dbReference>
<dbReference type="InterPro" id="IPR036318">
    <property type="entry name" value="FAD-bd_PCMH-like_sf"/>
</dbReference>
<dbReference type="InterPro" id="IPR016167">
    <property type="entry name" value="FAD-bd_PCMH_sub1"/>
</dbReference>
<dbReference type="InterPro" id="IPR016169">
    <property type="entry name" value="FAD-bd_PCMH_sub2"/>
</dbReference>
<dbReference type="InterPro" id="IPR016164">
    <property type="entry name" value="FAD-linked_Oxase-like_C"/>
</dbReference>
<dbReference type="InterPro" id="IPR050432">
    <property type="entry name" value="FAD-linked_Oxidoreductases_BP"/>
</dbReference>
<dbReference type="InterPro" id="IPR006094">
    <property type="entry name" value="Oxid_FAD_bind_N"/>
</dbReference>
<dbReference type="PANTHER" id="PTHR13878:SF121">
    <property type="entry name" value="CYTOKININ DEHYDROGENASE 4"/>
    <property type="match status" value="1"/>
</dbReference>
<dbReference type="PANTHER" id="PTHR13878">
    <property type="entry name" value="GULONOLACTONE OXIDASE"/>
    <property type="match status" value="1"/>
</dbReference>
<dbReference type="Pfam" id="PF09265">
    <property type="entry name" value="Cytokin-bind"/>
    <property type="match status" value="1"/>
</dbReference>
<dbReference type="Pfam" id="PF01565">
    <property type="entry name" value="FAD_binding_4"/>
    <property type="match status" value="1"/>
</dbReference>
<dbReference type="SUPFAM" id="SSF56176">
    <property type="entry name" value="FAD-binding/transporter-associated domain-like"/>
    <property type="match status" value="1"/>
</dbReference>
<dbReference type="SUPFAM" id="SSF55103">
    <property type="entry name" value="FAD-linked oxidases, C-terminal domain"/>
    <property type="match status" value="1"/>
</dbReference>
<dbReference type="PROSITE" id="PS51387">
    <property type="entry name" value="FAD_PCMH"/>
    <property type="match status" value="1"/>
</dbReference>
<name>CKX4_ARATH</name>
<proteinExistence type="evidence at protein level"/>
<feature type="signal peptide" evidence="3">
    <location>
        <begin position="1"/>
        <end position="26"/>
    </location>
</feature>
<feature type="chain" id="PRO_0000020421" description="Cytokinin dehydrogenase 4">
    <location>
        <begin position="27"/>
        <end position="524"/>
    </location>
</feature>
<feature type="domain" description="FAD-binding PCMH-type" evidence="4">
    <location>
        <begin position="60"/>
        <end position="249"/>
    </location>
</feature>
<feature type="binding site" evidence="1">
    <location>
        <position position="104"/>
    </location>
    <ligand>
        <name>FAD</name>
        <dbReference type="ChEBI" id="CHEBI:57692"/>
    </ligand>
</feature>
<feature type="binding site" evidence="2">
    <location>
        <position position="106"/>
    </location>
    <ligand>
        <name>FAD</name>
        <dbReference type="ChEBI" id="CHEBI:57692"/>
    </ligand>
</feature>
<feature type="binding site" evidence="2">
    <location>
        <position position="108"/>
    </location>
    <ligand>
        <name>FAD</name>
        <dbReference type="ChEBI" id="CHEBI:57692"/>
    </ligand>
</feature>
<feature type="binding site" evidence="2">
    <location>
        <position position="110"/>
    </location>
    <ligand>
        <name>FAD</name>
        <dbReference type="ChEBI" id="CHEBI:57692"/>
    </ligand>
</feature>
<feature type="binding site" evidence="2">
    <location>
        <position position="114"/>
    </location>
    <ligand>
        <name>FAD</name>
        <dbReference type="ChEBI" id="CHEBI:57692"/>
    </ligand>
</feature>
<feature type="binding site" evidence="2">
    <location>
        <position position="173"/>
    </location>
    <ligand>
        <name>FAD</name>
        <dbReference type="ChEBI" id="CHEBI:57692"/>
    </ligand>
</feature>
<feature type="binding site" evidence="2">
    <location>
        <position position="178"/>
    </location>
    <ligand>
        <name>FAD</name>
        <dbReference type="ChEBI" id="CHEBI:57692"/>
    </ligand>
</feature>
<feature type="binding site" evidence="2">
    <location>
        <position position="184"/>
    </location>
    <ligand>
        <name>FAD</name>
        <dbReference type="ChEBI" id="CHEBI:57692"/>
    </ligand>
</feature>
<feature type="binding site" evidence="2">
    <location>
        <position position="188"/>
    </location>
    <ligand>
        <name>FAD</name>
        <dbReference type="ChEBI" id="CHEBI:57692"/>
    </ligand>
</feature>
<feature type="binding site" evidence="2">
    <location>
        <position position="239"/>
    </location>
    <ligand>
        <name>FAD</name>
        <dbReference type="ChEBI" id="CHEBI:57692"/>
    </ligand>
</feature>
<feature type="binding site" evidence="2">
    <location>
        <position position="482"/>
    </location>
    <ligand>
        <name>FAD</name>
        <dbReference type="ChEBI" id="CHEBI:57692"/>
    </ligand>
</feature>
<feature type="binding site" evidence="2">
    <location>
        <position position="517"/>
    </location>
    <ligand>
        <name>FAD</name>
        <dbReference type="ChEBI" id="CHEBI:57692"/>
    </ligand>
</feature>
<feature type="binding site" evidence="2">
    <location>
        <position position="520"/>
    </location>
    <ligand>
        <name>FAD</name>
        <dbReference type="ChEBI" id="CHEBI:57692"/>
    </ligand>
</feature>
<feature type="modified residue" description="Pros-8alpha-FAD histidine" evidence="2">
    <location>
        <position position="109"/>
    </location>
</feature>
<feature type="glycosylation site" description="N-linked (GlcNAc...) asparagine" evidence="3">
    <location>
        <position position="39"/>
    </location>
</feature>
<feature type="glycosylation site" description="N-linked (GlcNAc...) asparagine" evidence="3">
    <location>
        <position position="58"/>
    </location>
</feature>
<feature type="glycosylation site" description="N-linked (GlcNAc...) asparagine" evidence="3">
    <location>
        <position position="124"/>
    </location>
</feature>
<feature type="glycosylation site" description="N-linked (GlcNAc...) asparagine" evidence="3">
    <location>
        <position position="411"/>
    </location>
</feature>
<feature type="sequence conflict" description="In Ref. 1; AAG30907." evidence="6" ref="1">
    <original>L</original>
    <variation>F</variation>
    <location>
        <position position="15"/>
    </location>
</feature>
<keyword id="KW-0025">Alternative splicing</keyword>
<keyword id="KW-0274">FAD</keyword>
<keyword id="KW-0285">Flavoprotein</keyword>
<keyword id="KW-0325">Glycoprotein</keyword>
<keyword id="KW-0560">Oxidoreductase</keyword>
<keyword id="KW-1185">Reference proteome</keyword>
<keyword id="KW-0964">Secreted</keyword>
<keyword id="KW-0732">Signal</keyword>
<sequence>MTNTLCLSLITLITLFISLTPTLIKSDEGIDVFLPISLNLTVLTDPFSISAASHDFGNITDENPGAVLCPSSTTEVARLLRFANGGFSYNKGSTSPASTFKVAARGQGHSLRGQASAPGGVVVNMTCLAMAAKPAAVVISADGTYADVAAGTMWVDVLKAAVDRGVSPVTWTDYLYLSVGGTLSNAGIGGQTFRHGPQISNVHELDVITGKGEMMTCSPKLNPELFYGVLGGLGQFGIITRARIALDHAPTRVKWSRILYSDFSAFKRDQERLISMTNDLGVDFLEGQLMMSNGFVDTSFFPLSDQTRVASLVNDHRIIYVLEVAKYYDRTTLPIIDQVIDTLSRTLGFAPGFMFVQDVPYFDFLNRVRNEEDKLRSLGLWEVPHPWLNIFVPGSRIQDFHDGVINGLLLNQTSTSGVTLFYPTNRNKWNNRMSTMTPDEDVFYVIGLLQSAGGSQNWQELENLNDKVIQFCENSGIKIKEYLMHYTRKEDWVKHFGPKWDDFLRKKIMFDPKRLLSPGQDIFN</sequence>
<gene>
    <name type="primary">CKX4</name>
    <name type="ordered locus">At4g29740</name>
    <name type="ORF">T16L4.250</name>
</gene>
<comment type="function">
    <text evidence="5">Catalyzes the oxidation of cytokinins, a family of N(6)-substituted adenine derivatives that are plant hormones, where the substituent is an isopentenyl group.</text>
</comment>
<comment type="catalytic activity">
    <reaction evidence="5">
        <text>N(6)-dimethylallyladenine + A + H2O = 3-methyl-2-butenal + adenine + AH2</text>
        <dbReference type="Rhea" id="RHEA:13625"/>
        <dbReference type="ChEBI" id="CHEBI:13193"/>
        <dbReference type="ChEBI" id="CHEBI:15377"/>
        <dbReference type="ChEBI" id="CHEBI:15825"/>
        <dbReference type="ChEBI" id="CHEBI:16708"/>
        <dbReference type="ChEBI" id="CHEBI:17499"/>
        <dbReference type="ChEBI" id="CHEBI:17660"/>
        <dbReference type="EC" id="1.5.99.12"/>
    </reaction>
</comment>
<comment type="cofactor">
    <cofactor evidence="1">
        <name>FAD</name>
        <dbReference type="ChEBI" id="CHEBI:57692"/>
    </cofactor>
</comment>
<comment type="biophysicochemical properties">
    <kinetics>
        <KM evidence="5">1.3 uM for isopentenyladenine</KM>
        <Vmax evidence="5">6.1 nmol/h/mg enzyme</Vmax>
    </kinetics>
</comment>
<comment type="subcellular location">
    <subcellularLocation>
        <location>Secreted</location>
        <location>Extracellular space</location>
    </subcellularLocation>
</comment>
<comment type="alternative products">
    <event type="alternative splicing"/>
    <isoform>
        <id>Q9FUJ2-1</id>
        <name>1</name>
        <sequence type="displayed"/>
    </isoform>
    <text>A number of isoforms are produced. According to EST sequences.</text>
</comment>
<comment type="tissue specificity">
    <text evidence="5">Expressed in trichomes and in developing stomata of young growing leaves. Strong expression in stipules and in the root cap, but not detected in the root meristem.</text>
</comment>
<comment type="developmental stage">
    <text evidence="5">High expression in stomatal meristemoids, but ceased during the differentiation of guard cells.</text>
</comment>
<comment type="similarity">
    <text evidence="6">Belongs to the oxygen-dependent FAD-linked oxidoreductase family.</text>
</comment>